<evidence type="ECO:0000250" key="1"/>
<evidence type="ECO:0000305" key="2"/>
<reference key="1">
    <citation type="journal article" date="2004" name="Nature">
        <title>Genome evolution in yeasts.</title>
        <authorList>
            <person name="Dujon B."/>
            <person name="Sherman D."/>
            <person name="Fischer G."/>
            <person name="Durrens P."/>
            <person name="Casaregola S."/>
            <person name="Lafontaine I."/>
            <person name="de Montigny J."/>
            <person name="Marck C."/>
            <person name="Neuveglise C."/>
            <person name="Talla E."/>
            <person name="Goffard N."/>
            <person name="Frangeul L."/>
            <person name="Aigle M."/>
            <person name="Anthouard V."/>
            <person name="Babour A."/>
            <person name="Barbe V."/>
            <person name="Barnay S."/>
            <person name="Blanchin S."/>
            <person name="Beckerich J.-M."/>
            <person name="Beyne E."/>
            <person name="Bleykasten C."/>
            <person name="Boisrame A."/>
            <person name="Boyer J."/>
            <person name="Cattolico L."/>
            <person name="Confanioleri F."/>
            <person name="de Daruvar A."/>
            <person name="Despons L."/>
            <person name="Fabre E."/>
            <person name="Fairhead C."/>
            <person name="Ferry-Dumazet H."/>
            <person name="Groppi A."/>
            <person name="Hantraye F."/>
            <person name="Hennequin C."/>
            <person name="Jauniaux N."/>
            <person name="Joyet P."/>
            <person name="Kachouri R."/>
            <person name="Kerrest A."/>
            <person name="Koszul R."/>
            <person name="Lemaire M."/>
            <person name="Lesur I."/>
            <person name="Ma L."/>
            <person name="Muller H."/>
            <person name="Nicaud J.-M."/>
            <person name="Nikolski M."/>
            <person name="Oztas S."/>
            <person name="Ozier-Kalogeropoulos O."/>
            <person name="Pellenz S."/>
            <person name="Potier S."/>
            <person name="Richard G.-F."/>
            <person name="Straub M.-L."/>
            <person name="Suleau A."/>
            <person name="Swennen D."/>
            <person name="Tekaia F."/>
            <person name="Wesolowski-Louvel M."/>
            <person name="Westhof E."/>
            <person name="Wirth B."/>
            <person name="Zeniou-Meyer M."/>
            <person name="Zivanovic Y."/>
            <person name="Bolotin-Fukuhara M."/>
            <person name="Thierry A."/>
            <person name="Bouchier C."/>
            <person name="Caudron B."/>
            <person name="Scarpelli C."/>
            <person name="Gaillardin C."/>
            <person name="Weissenbach J."/>
            <person name="Wincker P."/>
            <person name="Souciet J.-L."/>
        </authorList>
    </citation>
    <scope>NUCLEOTIDE SEQUENCE [LARGE SCALE GENOMIC DNA]</scope>
    <source>
        <strain>ATCC 36239 / CBS 767 / BCRC 21394 / JCM 1990 / NBRC 0083 / IGC 2968</strain>
    </source>
</reference>
<sequence>MTSVLFTSGATVTFRELIEVITSYDFIVETIIGNGITRMIVQYGNEIETGTQKHVSEEFYRQCVEDKELKQSLQLEVVSGSQNDSNVVTYRSNKYRGFEMVVFPFSNDIGSFISESDVVISHAGTGSIIDTLRLEKPLIVVTNDKLMNKHQEEVADELVKLGCCRKMTIEDMKSSQLKDCISEILSGPETFNKLPECSTTEVEGIIYHELVK</sequence>
<comment type="function">
    <text evidence="1">Involved in protein N-glycosylation. Essential for the second step of the dolichol-linked oligosaccharide pathway (By similarity).</text>
</comment>
<comment type="catalytic activity">
    <reaction>
        <text>an N-acetyl-alpha-D-glucosaminyl-diphospho-di-trans,poly-cis-dolichol + UDP-N-acetyl-alpha-D-glucosamine = an N,N'-diacetylchitobiosyl-diphospho-di-trans,poly-cis-dolichol + UDP + H(+)</text>
        <dbReference type="Rhea" id="RHEA:23380"/>
        <dbReference type="Rhea" id="RHEA-COMP:19507"/>
        <dbReference type="Rhea" id="RHEA-COMP:19510"/>
        <dbReference type="ChEBI" id="CHEBI:15378"/>
        <dbReference type="ChEBI" id="CHEBI:57269"/>
        <dbReference type="ChEBI" id="CHEBI:57705"/>
        <dbReference type="ChEBI" id="CHEBI:58223"/>
        <dbReference type="ChEBI" id="CHEBI:58427"/>
        <dbReference type="EC" id="2.4.1.141"/>
    </reaction>
</comment>
<comment type="subunit">
    <text evidence="1">Heterodimer with ALG14 to form a functional enzyme.</text>
</comment>
<comment type="subcellular location">
    <subcellularLocation>
        <location evidence="1">Endoplasmic reticulum</location>
    </subcellularLocation>
</comment>
<comment type="similarity">
    <text evidence="2">Belongs to the glycosyltransferase 28 family.</text>
</comment>
<feature type="chain" id="PRO_0000215601" description="UDP-N-acetylglucosamine transferase subunit ALG13">
    <location>
        <begin position="1"/>
        <end position="212"/>
    </location>
</feature>
<organism>
    <name type="scientific">Debaryomyces hansenii (strain ATCC 36239 / CBS 767 / BCRC 21394 / JCM 1990 / NBRC 0083 / IGC 2968)</name>
    <name type="common">Yeast</name>
    <name type="synonym">Torulaspora hansenii</name>
    <dbReference type="NCBI Taxonomy" id="284592"/>
    <lineage>
        <taxon>Eukaryota</taxon>
        <taxon>Fungi</taxon>
        <taxon>Dikarya</taxon>
        <taxon>Ascomycota</taxon>
        <taxon>Saccharomycotina</taxon>
        <taxon>Pichiomycetes</taxon>
        <taxon>Debaryomycetaceae</taxon>
        <taxon>Debaryomyces</taxon>
    </lineage>
</organism>
<protein>
    <recommendedName>
        <fullName>UDP-N-acetylglucosamine transferase subunit ALG13</fullName>
        <ecNumber>2.4.1.141</ecNumber>
    </recommendedName>
    <alternativeName>
        <fullName>Asparagine-linked glycosylation protein 13</fullName>
    </alternativeName>
</protein>
<proteinExistence type="inferred from homology"/>
<name>ALG13_DEBHA</name>
<dbReference type="EC" id="2.4.1.141"/>
<dbReference type="EMBL" id="CR382136">
    <property type="protein sequence ID" value="CAG86883.2"/>
    <property type="molecule type" value="Genomic_DNA"/>
</dbReference>
<dbReference type="RefSeq" id="XP_458739.2">
    <property type="nucleotide sequence ID" value="XM_458739.1"/>
</dbReference>
<dbReference type="SMR" id="Q6BST1"/>
<dbReference type="FunCoup" id="Q6BST1">
    <property type="interactions" value="345"/>
</dbReference>
<dbReference type="STRING" id="284592.Q6BST1"/>
<dbReference type="CAZy" id="GT1">
    <property type="family name" value="Glycosyltransferase Family 1"/>
</dbReference>
<dbReference type="GeneID" id="2900986"/>
<dbReference type="KEGG" id="dha:DEHA2D06468g"/>
<dbReference type="VEuPathDB" id="FungiDB:DEHA2D06468g"/>
<dbReference type="eggNOG" id="KOG3349">
    <property type="taxonomic scope" value="Eukaryota"/>
</dbReference>
<dbReference type="HOGENOM" id="CLU_085408_2_0_1"/>
<dbReference type="InParanoid" id="Q6BST1"/>
<dbReference type="OMA" id="QYGHEIK"/>
<dbReference type="OrthoDB" id="20273at2759"/>
<dbReference type="Proteomes" id="UP000000599">
    <property type="component" value="Chromosome D"/>
</dbReference>
<dbReference type="GO" id="GO:0005783">
    <property type="term" value="C:endoplasmic reticulum"/>
    <property type="evidence" value="ECO:0007669"/>
    <property type="project" value="UniProtKB-SubCell"/>
</dbReference>
<dbReference type="GO" id="GO:0004577">
    <property type="term" value="F:N-acetylglucosaminyldiphosphodolichol N-acetylglucosaminyltransferase activity"/>
    <property type="evidence" value="ECO:0007669"/>
    <property type="project" value="UniProtKB-EC"/>
</dbReference>
<dbReference type="GO" id="GO:0006488">
    <property type="term" value="P:dolichol-linked oligosaccharide biosynthetic process"/>
    <property type="evidence" value="ECO:0007669"/>
    <property type="project" value="InterPro"/>
</dbReference>
<dbReference type="Gene3D" id="3.40.50.2000">
    <property type="entry name" value="Glycogen Phosphorylase B"/>
    <property type="match status" value="1"/>
</dbReference>
<dbReference type="InterPro" id="IPR039042">
    <property type="entry name" value="Alg13-like"/>
</dbReference>
<dbReference type="InterPro" id="IPR007235">
    <property type="entry name" value="Glyco_trans_28_C"/>
</dbReference>
<dbReference type="PANTHER" id="PTHR12867">
    <property type="entry name" value="GLYCOSYL TRANSFERASE-RELATED"/>
    <property type="match status" value="1"/>
</dbReference>
<dbReference type="PANTHER" id="PTHR12867:SF6">
    <property type="entry name" value="N-ACETYLGLUCOSAMINYLDIPHOSPHODOLICHOL N-ACETYLGLUCOSAMINYLTRANSFERASE"/>
    <property type="match status" value="1"/>
</dbReference>
<dbReference type="Pfam" id="PF04101">
    <property type="entry name" value="Glyco_tran_28_C"/>
    <property type="match status" value="1"/>
</dbReference>
<dbReference type="SUPFAM" id="SSF53756">
    <property type="entry name" value="UDP-Glycosyltransferase/glycogen phosphorylase"/>
    <property type="match status" value="1"/>
</dbReference>
<gene>
    <name type="primary">ALG13</name>
    <name type="ordered locus">DEHA2D06468g</name>
</gene>
<accession>Q6BST1</accession>
<keyword id="KW-0256">Endoplasmic reticulum</keyword>
<keyword id="KW-0328">Glycosyltransferase</keyword>
<keyword id="KW-1185">Reference proteome</keyword>
<keyword id="KW-0808">Transferase</keyword>